<dbReference type="EMBL" id="Y08501">
    <property type="protein sequence ID" value="CAA69835.1"/>
    <property type="molecule type" value="Genomic_DNA"/>
</dbReference>
<dbReference type="EMBL" id="BK010421">
    <property type="status" value="NOT_ANNOTATED_CDS"/>
    <property type="molecule type" value="Genomic_DNA"/>
</dbReference>
<dbReference type="EMBL" id="AC007143">
    <property type="protein sequence ID" value="AAM15413.1"/>
    <property type="status" value="ALT_FRAME"/>
    <property type="molecule type" value="Genomic_DNA"/>
</dbReference>
<dbReference type="EMBL" id="AC007730">
    <property type="protein sequence ID" value="AAM15506.1"/>
    <property type="status" value="ALT_FRAME"/>
    <property type="molecule type" value="Genomic_DNA"/>
</dbReference>
<dbReference type="RefSeq" id="NP_085549.1">
    <property type="nucleotide sequence ID" value="NC_001284.2"/>
</dbReference>
<dbReference type="STRING" id="3702.P92530"/>
<dbReference type="PaxDb" id="3702-ATMG00940.1"/>
<dbReference type="EnsemblPlants" id="ATMG00940.1">
    <property type="protein sequence ID" value="ATMG00940.1"/>
    <property type="gene ID" value="ATMG00940"/>
</dbReference>
<dbReference type="Gramene" id="ATMG00940.1">
    <property type="protein sequence ID" value="ATMG00940.1"/>
    <property type="gene ID" value="ATMG00940"/>
</dbReference>
<dbReference type="Araport" id="ATMG00940"/>
<dbReference type="TAIR" id="ATMG00940">
    <property type="gene designation" value="ORF164"/>
</dbReference>
<dbReference type="eggNOG" id="ENOG502QVP0">
    <property type="taxonomic scope" value="Eukaryota"/>
</dbReference>
<dbReference type="HOGENOM" id="CLU_1715722_0_0_1"/>
<dbReference type="InParanoid" id="P92530"/>
<dbReference type="OMA" id="DEYCSYY"/>
<dbReference type="PRO" id="PR:P92530"/>
<dbReference type="Proteomes" id="UP000006548">
    <property type="component" value="Mitochondrion MT"/>
</dbReference>
<dbReference type="ExpressionAtlas" id="P92530">
    <property type="expression patterns" value="baseline and differential"/>
</dbReference>
<dbReference type="GO" id="GO:0005739">
    <property type="term" value="C:mitochondrion"/>
    <property type="evidence" value="ECO:0007669"/>
    <property type="project" value="UniProtKB-SubCell"/>
</dbReference>
<dbReference type="GO" id="GO:0005634">
    <property type="term" value="C:nucleus"/>
    <property type="evidence" value="ECO:0007669"/>
    <property type="project" value="InterPro"/>
</dbReference>
<dbReference type="GO" id="GO:0003677">
    <property type="term" value="F:DNA binding"/>
    <property type="evidence" value="ECO:0007669"/>
    <property type="project" value="InterPro"/>
</dbReference>
<dbReference type="GO" id="GO:0006355">
    <property type="term" value="P:regulation of DNA-templated transcription"/>
    <property type="evidence" value="ECO:0007669"/>
    <property type="project" value="InterPro"/>
</dbReference>
<dbReference type="GO" id="GO:0009725">
    <property type="term" value="P:response to hormone"/>
    <property type="evidence" value="ECO:0007669"/>
    <property type="project" value="InterPro"/>
</dbReference>
<dbReference type="Gene3D" id="2.30.30.1040">
    <property type="match status" value="1"/>
</dbReference>
<dbReference type="InterPro" id="IPR010525">
    <property type="entry name" value="ARF_dom"/>
</dbReference>
<dbReference type="InterPro" id="IPR044835">
    <property type="entry name" value="ARF_plant"/>
</dbReference>
<dbReference type="PANTHER" id="PTHR31384:SF94">
    <property type="entry name" value="AUXIN RESPONSE FACTOR 17"/>
    <property type="match status" value="1"/>
</dbReference>
<dbReference type="PANTHER" id="PTHR31384">
    <property type="entry name" value="AUXIN RESPONSE FACTOR 4-RELATED"/>
    <property type="match status" value="1"/>
</dbReference>
<dbReference type="Pfam" id="PF06507">
    <property type="entry name" value="ARF_AD"/>
    <property type="match status" value="1"/>
</dbReference>
<sequence length="164" mass="18341">MRKSADEMFIGVRRAPISSNVGGTSFYGGDEYCSYYQSNGGVAKEDDGSAKKGFRRTGKGKLTAEAVSEAINRAAQGLPFEVVYYPTAGWSDFVVKAEDVEASMAIFWTPGTRVKMAMETEDSSRITWFQGIVFYTYQETGPWRGSPWNSFRYKIPFTIPLIFL</sequence>
<accession>P92530</accession>
<accession>Q1ZXY2</accession>
<accession>Q8S880</accession>
<accession>Q8S8C1</accession>
<evidence type="ECO:0000305" key="1"/>
<evidence type="ECO:0000312" key="2">
    <source>
        <dbReference type="Araport" id="ATMG00940"/>
    </source>
</evidence>
<name>M940_ARATH</name>
<proteinExistence type="predicted"/>
<gene>
    <name evidence="2" type="ordered locus">AtMg00940</name>
</gene>
<geneLocation type="mitochondrion"/>
<comment type="subcellular location">
    <subcellularLocation>
        <location evidence="1">Mitochondrion</location>
    </subcellularLocation>
</comment>
<comment type="miscellaneous">
    <text>A stretch of 270 kb of the mitochondrial genome is duplicated within the centromere of chromosome 2 resulting in the duplication of the gene. The expression of this duplicated gene (At2g07677) is not demonstrated.</text>
</comment>
<comment type="sequence caution" evidence="1">
    <conflict type="frameshift">
        <sequence resource="EMBL-CDS" id="AAM15413"/>
    </conflict>
</comment>
<comment type="sequence caution" evidence="1">
    <conflict type="frameshift">
        <sequence resource="EMBL-CDS" id="AAM15506"/>
    </conflict>
</comment>
<feature type="chain" id="PRO_0000196802" description="Uncharacterized mitochondrial protein AtMg00940">
    <location>
        <begin position="1"/>
        <end position="164"/>
    </location>
</feature>
<feature type="sequence conflict" description="In Ref. 3; AAM15506." evidence="1" ref="3">
    <original>E</original>
    <variation>K</variation>
    <location>
        <position position="121"/>
    </location>
</feature>
<organism>
    <name type="scientific">Arabidopsis thaliana</name>
    <name type="common">Mouse-ear cress</name>
    <dbReference type="NCBI Taxonomy" id="3702"/>
    <lineage>
        <taxon>Eukaryota</taxon>
        <taxon>Viridiplantae</taxon>
        <taxon>Streptophyta</taxon>
        <taxon>Embryophyta</taxon>
        <taxon>Tracheophyta</taxon>
        <taxon>Spermatophyta</taxon>
        <taxon>Magnoliopsida</taxon>
        <taxon>eudicotyledons</taxon>
        <taxon>Gunneridae</taxon>
        <taxon>Pentapetalae</taxon>
        <taxon>rosids</taxon>
        <taxon>malvids</taxon>
        <taxon>Brassicales</taxon>
        <taxon>Brassicaceae</taxon>
        <taxon>Camelineae</taxon>
        <taxon>Arabidopsis</taxon>
    </lineage>
</organism>
<reference key="1">
    <citation type="journal article" date="1997" name="Nat. Genet.">
        <title>The mitochondrial genome of Arabidopsis thaliana contains 57 genes in 366,924 nucleotides.</title>
        <authorList>
            <person name="Unseld M."/>
            <person name="Marienfeld J.R."/>
            <person name="Brandt P."/>
            <person name="Brennicke A."/>
        </authorList>
    </citation>
    <scope>NUCLEOTIDE SEQUENCE [LARGE SCALE GENOMIC DNA]</scope>
    <source>
        <strain>cv. C24</strain>
    </source>
</reference>
<reference key="2">
    <citation type="journal article" date="2018" name="Plant Cell">
        <title>Correction of persistent errors in Arabidopsis reference mitochondrial genomes.</title>
        <authorList>
            <person name="Sloan D.B."/>
            <person name="Wu Z."/>
            <person name="Sharbrough J."/>
        </authorList>
    </citation>
    <scope>NUCLEOTIDE SEQUENCE [LARGE SCALE GENOMIC DNA]</scope>
    <source>
        <strain>cv. Columbia</strain>
    </source>
</reference>
<reference key="3">
    <citation type="journal article" date="1999" name="Nature">
        <title>Sequence and analysis of chromosome 2 of the plant Arabidopsis thaliana.</title>
        <authorList>
            <person name="Lin X."/>
            <person name="Kaul S."/>
            <person name="Rounsley S.D."/>
            <person name="Shea T.P."/>
            <person name="Benito M.-I."/>
            <person name="Town C.D."/>
            <person name="Fujii C.Y."/>
            <person name="Mason T.M."/>
            <person name="Bowman C.L."/>
            <person name="Barnstead M.E."/>
            <person name="Feldblyum T.V."/>
            <person name="Buell C.R."/>
            <person name="Ketchum K.A."/>
            <person name="Lee J.J."/>
            <person name="Ronning C.M."/>
            <person name="Koo H.L."/>
            <person name="Moffat K.S."/>
            <person name="Cronin L.A."/>
            <person name="Shen M."/>
            <person name="Pai G."/>
            <person name="Van Aken S."/>
            <person name="Umayam L."/>
            <person name="Tallon L.J."/>
            <person name="Gill J.E."/>
            <person name="Adams M.D."/>
            <person name="Carrera A.J."/>
            <person name="Creasy T.H."/>
            <person name="Goodman H.M."/>
            <person name="Somerville C.R."/>
            <person name="Copenhaver G.P."/>
            <person name="Preuss D."/>
            <person name="Nierman W.C."/>
            <person name="White O."/>
            <person name="Eisen J.A."/>
            <person name="Salzberg S.L."/>
            <person name="Fraser C.M."/>
            <person name="Venter J.C."/>
        </authorList>
    </citation>
    <scope>NUCLEOTIDE SEQUENCE [LARGE SCALE GENOMIC DNA] (AT2G07677)</scope>
    <source>
        <strain>cv. Columbia</strain>
    </source>
</reference>
<keyword id="KW-0496">Mitochondrion</keyword>
<keyword id="KW-1185">Reference proteome</keyword>
<protein>
    <recommendedName>
        <fullName>Uncharacterized mitochondrial protein AtMg00940</fullName>
    </recommendedName>
    <alternativeName>
        <fullName>ORF164</fullName>
    </alternativeName>
</protein>